<proteinExistence type="inferred from homology"/>
<protein>
    <recommendedName>
        <fullName>Flagellin</fullName>
    </recommendedName>
    <alternativeName>
        <fullName>Phase 1-C flagellin</fullName>
    </alternativeName>
</protein>
<reference key="1">
    <citation type="journal article" date="1993" name="J. Bacteriol.">
        <title>Molecular analyses of the Salmonella g. flagellar antigen complex.</title>
        <authorList>
            <person name="Masten B.J."/>
            <person name="Joys T.M."/>
        </authorList>
    </citation>
    <scope>NUCLEOTIDE SEQUENCE [GENOMIC DNA]</scope>
</reference>
<gene>
    <name type="primary">fliC</name>
</gene>
<accession>Q06983</accession>
<sequence length="505" mass="52995">MAQVINTNSLSLLTQNNLNKSQSSLSSAIERLSSGLRINSAKDDAAGQAIANRFTSNIKGLTQASRNANDGISIAQTTEGALNEINNNLQRVRELSVQATNGTNSDSDLKSIQDEIQQRLEEIDRVSNQTQFNGVKVLSQDNQMKIQVGANDGETITIDLQKIDVKSLGLDGFNVNGPKEATVGDLKSSFKNVTGYDTYAAGADKYRVDINSGAVVTDDAAPDKVYVNAANGQLTTDDAENNTAVNLFKTTKSTAGTDEAKAIASAIKGGKEGDTFDYKGVSFTIDTKAGNDGNGTVSTTINGEKVTLTVADITAGAANVNDATLQSSKNVYTSVVNGQFTFDDKTKNESAKLSDLEANNAVKGESKITVNGAEYTANAAGDKVTLAGKTMFIDKTASGVSTLINEDAAAAKKSTANPLASIDSALSKVDAVRSSLGAIQNRFDSAITNLGNTVTNLNSARSRIEDADYATEVSNMSKAQILQQAGTSVLAQANQVPQNVLSLLR</sequence>
<organism>
    <name type="scientific">Salmonella senftenberg</name>
    <dbReference type="NCBI Taxonomy" id="28150"/>
    <lineage>
        <taxon>Bacteria</taxon>
        <taxon>Pseudomonadati</taxon>
        <taxon>Pseudomonadota</taxon>
        <taxon>Gammaproteobacteria</taxon>
        <taxon>Enterobacterales</taxon>
        <taxon>Enterobacteriaceae</taxon>
        <taxon>Salmonella</taxon>
    </lineage>
</organism>
<dbReference type="EMBL" id="Z15072">
    <property type="protein sequence ID" value="CAA78781.1"/>
    <property type="molecule type" value="Genomic_DNA"/>
</dbReference>
<dbReference type="PIR" id="S33194">
    <property type="entry name" value="S33194"/>
</dbReference>
<dbReference type="RefSeq" id="WP_023203227.1">
    <property type="nucleotide sequence ID" value="NZ_VFFI01000009.1"/>
</dbReference>
<dbReference type="SMR" id="Q06983"/>
<dbReference type="GO" id="GO:0009288">
    <property type="term" value="C:bacterial-type flagellum"/>
    <property type="evidence" value="ECO:0007669"/>
    <property type="project" value="UniProtKB-SubCell"/>
</dbReference>
<dbReference type="GO" id="GO:0005576">
    <property type="term" value="C:extracellular region"/>
    <property type="evidence" value="ECO:0007669"/>
    <property type="project" value="UniProtKB-SubCell"/>
</dbReference>
<dbReference type="GO" id="GO:0005198">
    <property type="term" value="F:structural molecule activity"/>
    <property type="evidence" value="ECO:0007669"/>
    <property type="project" value="InterPro"/>
</dbReference>
<dbReference type="Gene3D" id="6.10.280.190">
    <property type="match status" value="1"/>
</dbReference>
<dbReference type="Gene3D" id="2.30.220.10">
    <property type="entry name" value="f41 fragment of flagellin, C-terminal domain"/>
    <property type="match status" value="1"/>
</dbReference>
<dbReference type="Gene3D" id="2.170.280.10">
    <property type="entry name" value="f41 fragment of flagellin, middle domain"/>
    <property type="match status" value="1"/>
</dbReference>
<dbReference type="Gene3D" id="1.20.1330.10">
    <property type="entry name" value="f41 fragment of flagellin, N-terminal domain"/>
    <property type="match status" value="1"/>
</dbReference>
<dbReference type="Gene3D" id="6.10.10.10">
    <property type="entry name" value="Flagellar export chaperone, C-terminal domain"/>
    <property type="match status" value="1"/>
</dbReference>
<dbReference type="InterPro" id="IPR001492">
    <property type="entry name" value="Flagellin"/>
</dbReference>
<dbReference type="InterPro" id="IPR046358">
    <property type="entry name" value="Flagellin_C"/>
</dbReference>
<dbReference type="InterPro" id="IPR042187">
    <property type="entry name" value="Flagellin_C_sub2"/>
</dbReference>
<dbReference type="InterPro" id="IPR001029">
    <property type="entry name" value="Flagellin_N"/>
</dbReference>
<dbReference type="PANTHER" id="PTHR42792">
    <property type="entry name" value="FLAGELLIN"/>
    <property type="match status" value="1"/>
</dbReference>
<dbReference type="PANTHER" id="PTHR42792:SF2">
    <property type="entry name" value="FLAGELLIN"/>
    <property type="match status" value="1"/>
</dbReference>
<dbReference type="Pfam" id="PF00700">
    <property type="entry name" value="Flagellin_C"/>
    <property type="match status" value="1"/>
</dbReference>
<dbReference type="Pfam" id="PF00669">
    <property type="entry name" value="Flagellin_N"/>
    <property type="match status" value="1"/>
</dbReference>
<dbReference type="Pfam" id="PF22370">
    <property type="entry name" value="FliC-like_3rd"/>
    <property type="match status" value="1"/>
</dbReference>
<dbReference type="PRINTS" id="PR00207">
    <property type="entry name" value="FLAGELLIN"/>
</dbReference>
<dbReference type="SUPFAM" id="SSF64518">
    <property type="entry name" value="Phase 1 flagellin"/>
    <property type="match status" value="1"/>
</dbReference>
<feature type="initiator methionine" description="Removed" evidence="1">
    <location>
        <position position="1"/>
    </location>
</feature>
<feature type="chain" id="PRO_0000182577" description="Flagellin">
    <location>
        <begin position="2"/>
        <end position="505"/>
    </location>
</feature>
<comment type="function">
    <text>Flagellin is the subunit protein which polymerizes to form the filaments of bacterial flagella.</text>
</comment>
<comment type="subcellular location">
    <subcellularLocation>
        <location>Secreted</location>
    </subcellularLocation>
    <subcellularLocation>
        <location>Bacterial flagellum</location>
    </subcellularLocation>
</comment>
<comment type="miscellaneous">
    <text>Individual Salmonella serotypes usually alternate between the production of 2 antigenic forms of flagella, termed phase 1 and phase 2, each specified by separate structural genes.</text>
</comment>
<comment type="similarity">
    <text evidence="2">Belongs to the bacterial flagellin family.</text>
</comment>
<keyword id="KW-0975">Bacterial flagellum</keyword>
<keyword id="KW-0964">Secreted</keyword>
<evidence type="ECO:0000250" key="1"/>
<evidence type="ECO:0000305" key="2"/>
<name>FLIC_SALSE</name>